<gene>
    <name evidence="1" type="primary">cof</name>
    <name type="ordered locus">EcE24377A_0482</name>
</gene>
<evidence type="ECO:0000255" key="1">
    <source>
        <dbReference type="HAMAP-Rule" id="MF_01847"/>
    </source>
</evidence>
<keyword id="KW-0378">Hydrolase</keyword>
<keyword id="KW-0460">Magnesium</keyword>
<keyword id="KW-0479">Metal-binding</keyword>
<keyword id="KW-1185">Reference proteome</keyword>
<sequence length="272" mass="30329">MARLAAFDMDGTLLMPDHHLGEKTLSTLARLRERDITLTFATGRHALEMQHILGALSLDAYLITGNGTRVHSLEGELLHRDDLPADVAELVLYQQWDTRASMHIFNDDGWFTGKEIPALLQAFVYSGFRYQIIDVKKMPLGSVTKICFCGDHDDLTRLQIQLYEALGERAHLCFSATDCLEVLPVGCNKGAALTVLTQHLGLSLRDCMAFGDAMNDREMLGSVGSGFIMGNAMPQLRAELPHLPVIGHCRNQAVSHYLTHWLDYPHLPYSPE</sequence>
<protein>
    <recommendedName>
        <fullName evidence="1">HMP-PP phosphatase</fullName>
        <ecNumber evidence="1">3.6.1.-</ecNumber>
    </recommendedName>
</protein>
<feature type="chain" id="PRO_0000342981" description="HMP-PP phosphatase">
    <location>
        <begin position="1"/>
        <end position="272"/>
    </location>
</feature>
<feature type="active site" description="Nucleophile" evidence="1">
    <location>
        <position position="8"/>
    </location>
</feature>
<feature type="binding site" evidence="1">
    <location>
        <position position="8"/>
    </location>
    <ligand>
        <name>Mg(2+)</name>
        <dbReference type="ChEBI" id="CHEBI:18420"/>
    </ligand>
</feature>
<feature type="binding site" evidence="1">
    <location>
        <position position="10"/>
    </location>
    <ligand>
        <name>Mg(2+)</name>
        <dbReference type="ChEBI" id="CHEBI:18420"/>
    </ligand>
</feature>
<feature type="binding site" evidence="1">
    <location>
        <position position="212"/>
    </location>
    <ligand>
        <name>Mg(2+)</name>
        <dbReference type="ChEBI" id="CHEBI:18420"/>
    </ligand>
</feature>
<reference key="1">
    <citation type="journal article" date="2008" name="J. Bacteriol.">
        <title>The pangenome structure of Escherichia coli: comparative genomic analysis of E. coli commensal and pathogenic isolates.</title>
        <authorList>
            <person name="Rasko D.A."/>
            <person name="Rosovitz M.J."/>
            <person name="Myers G.S.A."/>
            <person name="Mongodin E.F."/>
            <person name="Fricke W.F."/>
            <person name="Gajer P."/>
            <person name="Crabtree J."/>
            <person name="Sebaihia M."/>
            <person name="Thomson N.R."/>
            <person name="Chaudhuri R."/>
            <person name="Henderson I.R."/>
            <person name="Sperandio V."/>
            <person name="Ravel J."/>
        </authorList>
    </citation>
    <scope>NUCLEOTIDE SEQUENCE [LARGE SCALE GENOMIC DNA]</scope>
    <source>
        <strain>E24377A / ETEC</strain>
    </source>
</reference>
<accession>A7ZIK4</accession>
<comment type="function">
    <text evidence="1">Catalyzes the hydrolysis of 4-amino-2-methyl-5-hydroxymethylpyrimidine pyrophosphate (HMP-PP) to 4-amino-2-methyl-5-hydroxymethylpyrimidine phosphate (HMP-P).</text>
</comment>
<comment type="catalytic activity">
    <reaction evidence="1">
        <text>4-amino-2-methyl-5-(diphosphooxymethyl)pyrimidine + H2O = 4-amino-2-methyl-5-(phosphooxymethyl)pyrimidine + phosphate + H(+)</text>
        <dbReference type="Rhea" id="RHEA:27914"/>
        <dbReference type="ChEBI" id="CHEBI:15377"/>
        <dbReference type="ChEBI" id="CHEBI:15378"/>
        <dbReference type="ChEBI" id="CHEBI:43474"/>
        <dbReference type="ChEBI" id="CHEBI:57841"/>
        <dbReference type="ChEBI" id="CHEBI:58354"/>
    </reaction>
</comment>
<comment type="cofactor">
    <cofactor evidence="1">
        <name>Mg(2+)</name>
        <dbReference type="ChEBI" id="CHEBI:18420"/>
    </cofactor>
</comment>
<comment type="similarity">
    <text evidence="1">Belongs to the HAD-like hydrolase superfamily. Cof family.</text>
</comment>
<organism>
    <name type="scientific">Escherichia coli O139:H28 (strain E24377A / ETEC)</name>
    <dbReference type="NCBI Taxonomy" id="331111"/>
    <lineage>
        <taxon>Bacteria</taxon>
        <taxon>Pseudomonadati</taxon>
        <taxon>Pseudomonadota</taxon>
        <taxon>Gammaproteobacteria</taxon>
        <taxon>Enterobacterales</taxon>
        <taxon>Enterobacteriaceae</taxon>
        <taxon>Escherichia</taxon>
    </lineage>
</organism>
<dbReference type="EC" id="3.6.1.-" evidence="1"/>
<dbReference type="EMBL" id="CP000800">
    <property type="protein sequence ID" value="ABV17995.1"/>
    <property type="molecule type" value="Genomic_DNA"/>
</dbReference>
<dbReference type="RefSeq" id="WP_000113027.1">
    <property type="nucleotide sequence ID" value="NC_009801.1"/>
</dbReference>
<dbReference type="SMR" id="A7ZIK4"/>
<dbReference type="GeneID" id="93777004"/>
<dbReference type="KEGG" id="ecw:EcE24377A_0482"/>
<dbReference type="HOGENOM" id="CLU_044146_5_2_6"/>
<dbReference type="Proteomes" id="UP000001122">
    <property type="component" value="Chromosome"/>
</dbReference>
<dbReference type="GO" id="GO:0002145">
    <property type="term" value="F:4-amino-5-hydroxymethyl-2-methylpyrimidine diphosphatase activity"/>
    <property type="evidence" value="ECO:0007669"/>
    <property type="project" value="RHEA"/>
</dbReference>
<dbReference type="GO" id="GO:0000287">
    <property type="term" value="F:magnesium ion binding"/>
    <property type="evidence" value="ECO:0000250"/>
    <property type="project" value="UniProtKB"/>
</dbReference>
<dbReference type="GO" id="GO:0016791">
    <property type="term" value="F:phosphatase activity"/>
    <property type="evidence" value="ECO:0000250"/>
    <property type="project" value="UniProtKB"/>
</dbReference>
<dbReference type="CDD" id="cd07516">
    <property type="entry name" value="HAD_Pase"/>
    <property type="match status" value="1"/>
</dbReference>
<dbReference type="FunFam" id="3.30.1240.10:FF:000002">
    <property type="entry name" value="HMP-PP phosphatase"/>
    <property type="match status" value="1"/>
</dbReference>
<dbReference type="Gene3D" id="3.30.1240.10">
    <property type="match status" value="1"/>
</dbReference>
<dbReference type="Gene3D" id="3.40.50.1000">
    <property type="entry name" value="HAD superfamily/HAD-like"/>
    <property type="match status" value="1"/>
</dbReference>
<dbReference type="HAMAP" id="MF_01847">
    <property type="entry name" value="HMP_PP_phosphat"/>
    <property type="match status" value="1"/>
</dbReference>
<dbReference type="InterPro" id="IPR000150">
    <property type="entry name" value="Cof"/>
</dbReference>
<dbReference type="InterPro" id="IPR036412">
    <property type="entry name" value="HAD-like_sf"/>
</dbReference>
<dbReference type="InterPro" id="IPR006379">
    <property type="entry name" value="HAD-SF_hydro_IIB"/>
</dbReference>
<dbReference type="InterPro" id="IPR023214">
    <property type="entry name" value="HAD_sf"/>
</dbReference>
<dbReference type="InterPro" id="IPR023938">
    <property type="entry name" value="HMP-PP_phosphatase"/>
</dbReference>
<dbReference type="NCBIfam" id="TIGR00099">
    <property type="entry name" value="Cof-subfamily"/>
    <property type="match status" value="1"/>
</dbReference>
<dbReference type="NCBIfam" id="TIGR01484">
    <property type="entry name" value="HAD-SF-IIB"/>
    <property type="match status" value="1"/>
</dbReference>
<dbReference type="NCBIfam" id="NF011705">
    <property type="entry name" value="PRK15126.1"/>
    <property type="match status" value="1"/>
</dbReference>
<dbReference type="PANTHER" id="PTHR47267">
    <property type="match status" value="1"/>
</dbReference>
<dbReference type="PANTHER" id="PTHR47267:SF2">
    <property type="entry name" value="HMP-PP PHOSPHATASE"/>
    <property type="match status" value="1"/>
</dbReference>
<dbReference type="Pfam" id="PF08282">
    <property type="entry name" value="Hydrolase_3"/>
    <property type="match status" value="1"/>
</dbReference>
<dbReference type="SFLD" id="SFLDG01140">
    <property type="entry name" value="C2.B:_Phosphomannomutase_and_P"/>
    <property type="match status" value="1"/>
</dbReference>
<dbReference type="SFLD" id="SFLDS00003">
    <property type="entry name" value="Haloacid_Dehalogenase"/>
    <property type="match status" value="1"/>
</dbReference>
<dbReference type="SUPFAM" id="SSF56784">
    <property type="entry name" value="HAD-like"/>
    <property type="match status" value="1"/>
</dbReference>
<dbReference type="PROSITE" id="PS01228">
    <property type="entry name" value="COF_1"/>
    <property type="match status" value="1"/>
</dbReference>
<dbReference type="PROSITE" id="PS01229">
    <property type="entry name" value="COF_2"/>
    <property type="match status" value="1"/>
</dbReference>
<name>COF_ECO24</name>
<proteinExistence type="inferred from homology"/>